<proteinExistence type="inferred from homology"/>
<protein>
    <recommendedName>
        <fullName evidence="1">Large ribosomal subunit protein bL20</fullName>
    </recommendedName>
    <alternativeName>
        <fullName evidence="2">50S ribosomal protein L20</fullName>
    </alternativeName>
</protein>
<evidence type="ECO:0000255" key="1">
    <source>
        <dbReference type="HAMAP-Rule" id="MF_00382"/>
    </source>
</evidence>
<evidence type="ECO:0000305" key="2"/>
<accession>C0Z9B6</accession>
<sequence length="119" mass="13700">MPRVKGGIVTRRRHKKILKLAKGYFGSKHRLFKSANAQVMKSLLYAYRDRRQKKRDFRKLWITRINAQARMNGLSYSRLMHGLKVAGIEVNRKMLADLAVNDKAAFNELATVAKSKLNA</sequence>
<dbReference type="EMBL" id="AP008955">
    <property type="protein sequence ID" value="BAH42586.1"/>
    <property type="molecule type" value="Genomic_DNA"/>
</dbReference>
<dbReference type="RefSeq" id="WP_007728568.1">
    <property type="nucleotide sequence ID" value="NC_012491.1"/>
</dbReference>
<dbReference type="SMR" id="C0Z9B6"/>
<dbReference type="STRING" id="358681.BBR47_16090"/>
<dbReference type="GeneID" id="95748854"/>
<dbReference type="KEGG" id="bbe:BBR47_16090"/>
<dbReference type="eggNOG" id="COG0292">
    <property type="taxonomic scope" value="Bacteria"/>
</dbReference>
<dbReference type="HOGENOM" id="CLU_123265_0_1_9"/>
<dbReference type="Proteomes" id="UP000001877">
    <property type="component" value="Chromosome"/>
</dbReference>
<dbReference type="GO" id="GO:1990904">
    <property type="term" value="C:ribonucleoprotein complex"/>
    <property type="evidence" value="ECO:0007669"/>
    <property type="project" value="UniProtKB-KW"/>
</dbReference>
<dbReference type="GO" id="GO:0005840">
    <property type="term" value="C:ribosome"/>
    <property type="evidence" value="ECO:0007669"/>
    <property type="project" value="UniProtKB-KW"/>
</dbReference>
<dbReference type="GO" id="GO:0019843">
    <property type="term" value="F:rRNA binding"/>
    <property type="evidence" value="ECO:0007669"/>
    <property type="project" value="UniProtKB-UniRule"/>
</dbReference>
<dbReference type="GO" id="GO:0003735">
    <property type="term" value="F:structural constituent of ribosome"/>
    <property type="evidence" value="ECO:0007669"/>
    <property type="project" value="InterPro"/>
</dbReference>
<dbReference type="GO" id="GO:0000027">
    <property type="term" value="P:ribosomal large subunit assembly"/>
    <property type="evidence" value="ECO:0007669"/>
    <property type="project" value="UniProtKB-UniRule"/>
</dbReference>
<dbReference type="GO" id="GO:0006412">
    <property type="term" value="P:translation"/>
    <property type="evidence" value="ECO:0007669"/>
    <property type="project" value="InterPro"/>
</dbReference>
<dbReference type="CDD" id="cd07026">
    <property type="entry name" value="Ribosomal_L20"/>
    <property type="match status" value="1"/>
</dbReference>
<dbReference type="FunFam" id="1.10.1900.20:FF:000001">
    <property type="entry name" value="50S ribosomal protein L20"/>
    <property type="match status" value="1"/>
</dbReference>
<dbReference type="Gene3D" id="6.10.160.10">
    <property type="match status" value="1"/>
</dbReference>
<dbReference type="Gene3D" id="1.10.1900.20">
    <property type="entry name" value="Ribosomal protein L20"/>
    <property type="match status" value="1"/>
</dbReference>
<dbReference type="HAMAP" id="MF_00382">
    <property type="entry name" value="Ribosomal_bL20"/>
    <property type="match status" value="1"/>
</dbReference>
<dbReference type="InterPro" id="IPR005813">
    <property type="entry name" value="Ribosomal_bL20"/>
</dbReference>
<dbReference type="InterPro" id="IPR049946">
    <property type="entry name" value="RIBOSOMAL_L20_CS"/>
</dbReference>
<dbReference type="InterPro" id="IPR035566">
    <property type="entry name" value="Ribosomal_protein_bL20_C"/>
</dbReference>
<dbReference type="NCBIfam" id="TIGR01032">
    <property type="entry name" value="rplT_bact"/>
    <property type="match status" value="1"/>
</dbReference>
<dbReference type="PANTHER" id="PTHR10986">
    <property type="entry name" value="39S RIBOSOMAL PROTEIN L20"/>
    <property type="match status" value="1"/>
</dbReference>
<dbReference type="Pfam" id="PF00453">
    <property type="entry name" value="Ribosomal_L20"/>
    <property type="match status" value="1"/>
</dbReference>
<dbReference type="PRINTS" id="PR00062">
    <property type="entry name" value="RIBOSOMALL20"/>
</dbReference>
<dbReference type="SUPFAM" id="SSF74731">
    <property type="entry name" value="Ribosomal protein L20"/>
    <property type="match status" value="1"/>
</dbReference>
<dbReference type="PROSITE" id="PS00937">
    <property type="entry name" value="RIBOSOMAL_L20"/>
    <property type="match status" value="1"/>
</dbReference>
<comment type="function">
    <text evidence="1">Binds directly to 23S ribosomal RNA and is necessary for the in vitro assembly process of the 50S ribosomal subunit. It is not involved in the protein synthesizing functions of that subunit.</text>
</comment>
<comment type="similarity">
    <text evidence="1">Belongs to the bacterial ribosomal protein bL20 family.</text>
</comment>
<name>RL20_BREBN</name>
<organism>
    <name type="scientific">Brevibacillus brevis (strain 47 / JCM 6285 / NBRC 100599)</name>
    <dbReference type="NCBI Taxonomy" id="358681"/>
    <lineage>
        <taxon>Bacteria</taxon>
        <taxon>Bacillati</taxon>
        <taxon>Bacillota</taxon>
        <taxon>Bacilli</taxon>
        <taxon>Bacillales</taxon>
        <taxon>Paenibacillaceae</taxon>
        <taxon>Brevibacillus</taxon>
    </lineage>
</organism>
<gene>
    <name evidence="1" type="primary">rplT</name>
    <name type="ordered locus">BBR47_16090</name>
</gene>
<feature type="chain" id="PRO_1000193941" description="Large ribosomal subunit protein bL20">
    <location>
        <begin position="1"/>
        <end position="119"/>
    </location>
</feature>
<reference key="1">
    <citation type="submission" date="2005-03" db="EMBL/GenBank/DDBJ databases">
        <title>Brevibacillus brevis strain 47, complete genome.</title>
        <authorList>
            <person name="Hosoyama A."/>
            <person name="Yamada R."/>
            <person name="Hongo Y."/>
            <person name="Terui Y."/>
            <person name="Ankai A."/>
            <person name="Masuyama W."/>
            <person name="Sekiguchi M."/>
            <person name="Takeda T."/>
            <person name="Asano K."/>
            <person name="Ohji S."/>
            <person name="Ichikawa N."/>
            <person name="Narita S."/>
            <person name="Aoki N."/>
            <person name="Miura H."/>
            <person name="Matsushita S."/>
            <person name="Sekigawa T."/>
            <person name="Yamagata H."/>
            <person name="Yoshikawa H."/>
            <person name="Udaka S."/>
            <person name="Tanikawa S."/>
            <person name="Fujita N."/>
        </authorList>
    </citation>
    <scope>NUCLEOTIDE SEQUENCE [LARGE SCALE GENOMIC DNA]</scope>
    <source>
        <strain>47 / JCM 6285 / NBRC 100599</strain>
    </source>
</reference>
<keyword id="KW-1185">Reference proteome</keyword>
<keyword id="KW-0687">Ribonucleoprotein</keyword>
<keyword id="KW-0689">Ribosomal protein</keyword>
<keyword id="KW-0694">RNA-binding</keyword>
<keyword id="KW-0699">rRNA-binding</keyword>